<protein>
    <recommendedName>
        <fullName evidence="1">Bifunctional protein FolD</fullName>
    </recommendedName>
    <domain>
        <recommendedName>
            <fullName evidence="1">Methylenetetrahydrofolate dehydrogenase</fullName>
            <ecNumber evidence="1">1.5.1.5</ecNumber>
        </recommendedName>
    </domain>
    <domain>
        <recommendedName>
            <fullName evidence="1">Methenyltetrahydrofolate cyclohydrolase</fullName>
            <ecNumber evidence="1">3.5.4.9</ecNumber>
        </recommendedName>
    </domain>
</protein>
<accession>Q8EV80</accession>
<comment type="function">
    <text evidence="1">Catalyzes the oxidation of 5,10-methylenetetrahydrofolate to 5,10-methenyltetrahydrofolate and then the hydrolysis of 5,10-methenyltetrahydrofolate to 10-formyltetrahydrofolate.</text>
</comment>
<comment type="catalytic activity">
    <reaction evidence="1">
        <text>(6R)-5,10-methylene-5,6,7,8-tetrahydrofolate + NADP(+) = (6R)-5,10-methenyltetrahydrofolate + NADPH</text>
        <dbReference type="Rhea" id="RHEA:22812"/>
        <dbReference type="ChEBI" id="CHEBI:15636"/>
        <dbReference type="ChEBI" id="CHEBI:57455"/>
        <dbReference type="ChEBI" id="CHEBI:57783"/>
        <dbReference type="ChEBI" id="CHEBI:58349"/>
        <dbReference type="EC" id="1.5.1.5"/>
    </reaction>
</comment>
<comment type="catalytic activity">
    <reaction evidence="1">
        <text>(6R)-5,10-methenyltetrahydrofolate + H2O = (6R)-10-formyltetrahydrofolate + H(+)</text>
        <dbReference type="Rhea" id="RHEA:23700"/>
        <dbReference type="ChEBI" id="CHEBI:15377"/>
        <dbReference type="ChEBI" id="CHEBI:15378"/>
        <dbReference type="ChEBI" id="CHEBI:57455"/>
        <dbReference type="ChEBI" id="CHEBI:195366"/>
        <dbReference type="EC" id="3.5.4.9"/>
    </reaction>
</comment>
<comment type="pathway">
    <text evidence="1">One-carbon metabolism; tetrahydrofolate interconversion.</text>
</comment>
<comment type="subunit">
    <text evidence="1">Homodimer.</text>
</comment>
<comment type="similarity">
    <text evidence="1">Belongs to the tetrahydrofolate dehydrogenase/cyclohydrolase family.</text>
</comment>
<name>FOLD_MALP2</name>
<proteinExistence type="inferred from homology"/>
<organism>
    <name type="scientific">Malacoplasma penetrans (strain HF-2)</name>
    <name type="common">Mycoplasma penetrans</name>
    <dbReference type="NCBI Taxonomy" id="272633"/>
    <lineage>
        <taxon>Bacteria</taxon>
        <taxon>Bacillati</taxon>
        <taxon>Mycoplasmatota</taxon>
        <taxon>Mycoplasmoidales</taxon>
        <taxon>Mycoplasmoidaceae</taxon>
        <taxon>Malacoplasma</taxon>
    </lineage>
</organism>
<feature type="chain" id="PRO_0000268409" description="Bifunctional protein FolD">
    <location>
        <begin position="1"/>
        <end position="282"/>
    </location>
</feature>
<feature type="binding site" evidence="1">
    <location>
        <begin position="163"/>
        <end position="165"/>
    </location>
    <ligand>
        <name>NADP(+)</name>
        <dbReference type="ChEBI" id="CHEBI:58349"/>
    </ligand>
</feature>
<feature type="binding site" evidence="1">
    <location>
        <position position="188"/>
    </location>
    <ligand>
        <name>NADP(+)</name>
        <dbReference type="ChEBI" id="CHEBI:58349"/>
    </ligand>
</feature>
<feature type="binding site" evidence="1">
    <location>
        <position position="229"/>
    </location>
    <ligand>
        <name>NADP(+)</name>
        <dbReference type="ChEBI" id="CHEBI:58349"/>
    </ligand>
</feature>
<gene>
    <name evidence="1" type="primary">folD</name>
    <name type="ordered locus">MYPE6880</name>
</gene>
<sequence>MIVNCIDIANNILDKFKSDLEKLKKKKIIPHMAIVKINDDAASDKYVSIKLKKAAELGVKTTLISEGIKTQDDLIKQIHILNNDDSIDGYIIQLPLPKGFDSNVICEHIDVNKDIDGLSSFAISRNLANSNLFHPKPCTANGIIEILKQSNYSIEGKHAVIINRSMIVGKPLIGLFLENNATVTVCHTKTQNLKEMTKTADIVVVAIGKPDFLTKDMVNPNAFVIDAGISVVDGKVVGDAAKDLQEYVKYITPVPNGVGRLTVAMIFKNLMDLVKEKYNERI</sequence>
<keyword id="KW-0028">Amino-acid biosynthesis</keyword>
<keyword id="KW-0368">Histidine biosynthesis</keyword>
<keyword id="KW-0378">Hydrolase</keyword>
<keyword id="KW-0486">Methionine biosynthesis</keyword>
<keyword id="KW-0511">Multifunctional enzyme</keyword>
<keyword id="KW-0521">NADP</keyword>
<keyword id="KW-0554">One-carbon metabolism</keyword>
<keyword id="KW-0560">Oxidoreductase</keyword>
<keyword id="KW-0658">Purine biosynthesis</keyword>
<keyword id="KW-1185">Reference proteome</keyword>
<dbReference type="EC" id="1.5.1.5" evidence="1"/>
<dbReference type="EC" id="3.5.4.9" evidence="1"/>
<dbReference type="EMBL" id="BA000026">
    <property type="protein sequence ID" value="BAC44480.1"/>
    <property type="molecule type" value="Genomic_DNA"/>
</dbReference>
<dbReference type="RefSeq" id="WP_011077510.1">
    <property type="nucleotide sequence ID" value="NC_004432.1"/>
</dbReference>
<dbReference type="SMR" id="Q8EV80"/>
<dbReference type="FunCoup" id="Q8EV80">
    <property type="interactions" value="200"/>
</dbReference>
<dbReference type="STRING" id="272633.gene:10731809"/>
<dbReference type="KEGG" id="mpe:MYPE6880"/>
<dbReference type="eggNOG" id="COG0190">
    <property type="taxonomic scope" value="Bacteria"/>
</dbReference>
<dbReference type="HOGENOM" id="CLU_034045_2_1_14"/>
<dbReference type="InParanoid" id="Q8EV80"/>
<dbReference type="UniPathway" id="UPA00193"/>
<dbReference type="Proteomes" id="UP000002522">
    <property type="component" value="Chromosome"/>
</dbReference>
<dbReference type="GO" id="GO:0005829">
    <property type="term" value="C:cytosol"/>
    <property type="evidence" value="ECO:0007669"/>
    <property type="project" value="TreeGrafter"/>
</dbReference>
<dbReference type="GO" id="GO:0004477">
    <property type="term" value="F:methenyltetrahydrofolate cyclohydrolase activity"/>
    <property type="evidence" value="ECO:0007669"/>
    <property type="project" value="UniProtKB-UniRule"/>
</dbReference>
<dbReference type="GO" id="GO:0004488">
    <property type="term" value="F:methylenetetrahydrofolate dehydrogenase (NADP+) activity"/>
    <property type="evidence" value="ECO:0007669"/>
    <property type="project" value="UniProtKB-UniRule"/>
</dbReference>
<dbReference type="GO" id="GO:0000105">
    <property type="term" value="P:L-histidine biosynthetic process"/>
    <property type="evidence" value="ECO:0007669"/>
    <property type="project" value="UniProtKB-KW"/>
</dbReference>
<dbReference type="GO" id="GO:0009086">
    <property type="term" value="P:methionine biosynthetic process"/>
    <property type="evidence" value="ECO:0007669"/>
    <property type="project" value="UniProtKB-KW"/>
</dbReference>
<dbReference type="GO" id="GO:0006164">
    <property type="term" value="P:purine nucleotide biosynthetic process"/>
    <property type="evidence" value="ECO:0007669"/>
    <property type="project" value="UniProtKB-KW"/>
</dbReference>
<dbReference type="GO" id="GO:0035999">
    <property type="term" value="P:tetrahydrofolate interconversion"/>
    <property type="evidence" value="ECO:0007669"/>
    <property type="project" value="UniProtKB-UniRule"/>
</dbReference>
<dbReference type="CDD" id="cd01080">
    <property type="entry name" value="NAD_bind_m-THF_DH_Cyclohyd"/>
    <property type="match status" value="1"/>
</dbReference>
<dbReference type="FunFam" id="3.40.50.720:FF:000094">
    <property type="entry name" value="Bifunctional protein FolD"/>
    <property type="match status" value="1"/>
</dbReference>
<dbReference type="FunFam" id="3.40.50.10860:FF:000005">
    <property type="entry name" value="C-1-tetrahydrofolate synthase, cytoplasmic, putative"/>
    <property type="match status" value="1"/>
</dbReference>
<dbReference type="Gene3D" id="3.40.50.10860">
    <property type="entry name" value="Leucine Dehydrogenase, chain A, domain 1"/>
    <property type="match status" value="1"/>
</dbReference>
<dbReference type="Gene3D" id="3.40.50.720">
    <property type="entry name" value="NAD(P)-binding Rossmann-like Domain"/>
    <property type="match status" value="1"/>
</dbReference>
<dbReference type="HAMAP" id="MF_01576">
    <property type="entry name" value="THF_DHG_CYH"/>
    <property type="match status" value="1"/>
</dbReference>
<dbReference type="InterPro" id="IPR046346">
    <property type="entry name" value="Aminoacid_DH-like_N_sf"/>
</dbReference>
<dbReference type="InterPro" id="IPR036291">
    <property type="entry name" value="NAD(P)-bd_dom_sf"/>
</dbReference>
<dbReference type="InterPro" id="IPR000672">
    <property type="entry name" value="THF_DH/CycHdrlase"/>
</dbReference>
<dbReference type="InterPro" id="IPR020630">
    <property type="entry name" value="THF_DH/CycHdrlase_cat_dom"/>
</dbReference>
<dbReference type="InterPro" id="IPR020631">
    <property type="entry name" value="THF_DH/CycHdrlase_NAD-bd_dom"/>
</dbReference>
<dbReference type="PANTHER" id="PTHR48099:SF5">
    <property type="entry name" value="C-1-TETRAHYDROFOLATE SYNTHASE, CYTOPLASMIC"/>
    <property type="match status" value="1"/>
</dbReference>
<dbReference type="PANTHER" id="PTHR48099">
    <property type="entry name" value="C-1-TETRAHYDROFOLATE SYNTHASE, CYTOPLASMIC-RELATED"/>
    <property type="match status" value="1"/>
</dbReference>
<dbReference type="Pfam" id="PF00763">
    <property type="entry name" value="THF_DHG_CYH"/>
    <property type="match status" value="1"/>
</dbReference>
<dbReference type="Pfam" id="PF02882">
    <property type="entry name" value="THF_DHG_CYH_C"/>
    <property type="match status" value="1"/>
</dbReference>
<dbReference type="PRINTS" id="PR00085">
    <property type="entry name" value="THFDHDRGNASE"/>
</dbReference>
<dbReference type="SUPFAM" id="SSF53223">
    <property type="entry name" value="Aminoacid dehydrogenase-like, N-terminal domain"/>
    <property type="match status" value="1"/>
</dbReference>
<dbReference type="SUPFAM" id="SSF51735">
    <property type="entry name" value="NAD(P)-binding Rossmann-fold domains"/>
    <property type="match status" value="1"/>
</dbReference>
<evidence type="ECO:0000255" key="1">
    <source>
        <dbReference type="HAMAP-Rule" id="MF_01576"/>
    </source>
</evidence>
<reference key="1">
    <citation type="journal article" date="2002" name="Nucleic Acids Res.">
        <title>The complete genomic sequence of Mycoplasma penetrans, an intracellular bacterial pathogen in humans.</title>
        <authorList>
            <person name="Sasaki Y."/>
            <person name="Ishikawa J."/>
            <person name="Yamashita A."/>
            <person name="Oshima K."/>
            <person name="Kenri T."/>
            <person name="Furuya K."/>
            <person name="Yoshino C."/>
            <person name="Horino A."/>
            <person name="Shiba T."/>
            <person name="Sasaki T."/>
            <person name="Hattori M."/>
        </authorList>
    </citation>
    <scope>NUCLEOTIDE SEQUENCE [LARGE SCALE GENOMIC DNA]</scope>
    <source>
        <strain>HF-2</strain>
    </source>
</reference>